<evidence type="ECO:0000255" key="1">
    <source>
        <dbReference type="HAMAP-Rule" id="MF_00539"/>
    </source>
</evidence>
<evidence type="ECO:0000256" key="2">
    <source>
        <dbReference type="SAM" id="MobiDB-lite"/>
    </source>
</evidence>
<evidence type="ECO:0000305" key="3"/>
<sequence>MAHKKAGGSTRNGRDSEAKRLGVKRFGGESVLAGSIIVRQRGTKFHAGANVGCGRDHTLFAKADGKVKFEVKGPKNRKFISIEAE</sequence>
<protein>
    <recommendedName>
        <fullName evidence="1">Large ribosomal subunit protein bL27</fullName>
    </recommendedName>
    <alternativeName>
        <fullName evidence="3">50S ribosomal protein L27</fullName>
    </alternativeName>
</protein>
<keyword id="KW-0687">Ribonucleoprotein</keyword>
<keyword id="KW-0689">Ribosomal protein</keyword>
<dbReference type="EMBL" id="CP000802">
    <property type="protein sequence ID" value="ABV07604.1"/>
    <property type="molecule type" value="Genomic_DNA"/>
</dbReference>
<dbReference type="RefSeq" id="WP_000940595.1">
    <property type="nucleotide sequence ID" value="NC_009800.1"/>
</dbReference>
<dbReference type="SMR" id="A8A500"/>
<dbReference type="GeneID" id="93778796"/>
<dbReference type="KEGG" id="ecx:EcHS_A3378"/>
<dbReference type="HOGENOM" id="CLU_095424_4_1_6"/>
<dbReference type="GO" id="GO:0022625">
    <property type="term" value="C:cytosolic large ribosomal subunit"/>
    <property type="evidence" value="ECO:0007669"/>
    <property type="project" value="TreeGrafter"/>
</dbReference>
<dbReference type="GO" id="GO:0003735">
    <property type="term" value="F:structural constituent of ribosome"/>
    <property type="evidence" value="ECO:0007669"/>
    <property type="project" value="InterPro"/>
</dbReference>
<dbReference type="GO" id="GO:0006412">
    <property type="term" value="P:translation"/>
    <property type="evidence" value="ECO:0007669"/>
    <property type="project" value="UniProtKB-UniRule"/>
</dbReference>
<dbReference type="FunFam" id="2.40.50.100:FF:000001">
    <property type="entry name" value="50S ribosomal protein L27"/>
    <property type="match status" value="1"/>
</dbReference>
<dbReference type="Gene3D" id="2.40.50.100">
    <property type="match status" value="1"/>
</dbReference>
<dbReference type="HAMAP" id="MF_00539">
    <property type="entry name" value="Ribosomal_bL27"/>
    <property type="match status" value="1"/>
</dbReference>
<dbReference type="InterPro" id="IPR001684">
    <property type="entry name" value="Ribosomal_bL27"/>
</dbReference>
<dbReference type="InterPro" id="IPR018261">
    <property type="entry name" value="Ribosomal_bL27_CS"/>
</dbReference>
<dbReference type="NCBIfam" id="TIGR00062">
    <property type="entry name" value="L27"/>
    <property type="match status" value="1"/>
</dbReference>
<dbReference type="PANTHER" id="PTHR15893:SF0">
    <property type="entry name" value="LARGE RIBOSOMAL SUBUNIT PROTEIN BL27M"/>
    <property type="match status" value="1"/>
</dbReference>
<dbReference type="PANTHER" id="PTHR15893">
    <property type="entry name" value="RIBOSOMAL PROTEIN L27"/>
    <property type="match status" value="1"/>
</dbReference>
<dbReference type="Pfam" id="PF01016">
    <property type="entry name" value="Ribosomal_L27"/>
    <property type="match status" value="1"/>
</dbReference>
<dbReference type="PRINTS" id="PR00063">
    <property type="entry name" value="RIBOSOMALL27"/>
</dbReference>
<dbReference type="SUPFAM" id="SSF110324">
    <property type="entry name" value="Ribosomal L27 protein-like"/>
    <property type="match status" value="1"/>
</dbReference>
<dbReference type="PROSITE" id="PS00831">
    <property type="entry name" value="RIBOSOMAL_L27"/>
    <property type="match status" value="1"/>
</dbReference>
<proteinExistence type="inferred from homology"/>
<gene>
    <name evidence="1" type="primary">rpmA</name>
    <name type="ordered locus">EcHS_A3378</name>
</gene>
<feature type="chain" id="PRO_1000061045" description="Large ribosomal subunit protein bL27">
    <location>
        <begin position="1"/>
        <end position="85"/>
    </location>
</feature>
<feature type="region of interest" description="Disordered" evidence="2">
    <location>
        <begin position="1"/>
        <end position="20"/>
    </location>
</feature>
<accession>A8A500</accession>
<reference key="1">
    <citation type="journal article" date="2008" name="J. Bacteriol.">
        <title>The pangenome structure of Escherichia coli: comparative genomic analysis of E. coli commensal and pathogenic isolates.</title>
        <authorList>
            <person name="Rasko D.A."/>
            <person name="Rosovitz M.J."/>
            <person name="Myers G.S.A."/>
            <person name="Mongodin E.F."/>
            <person name="Fricke W.F."/>
            <person name="Gajer P."/>
            <person name="Crabtree J."/>
            <person name="Sebaihia M."/>
            <person name="Thomson N.R."/>
            <person name="Chaudhuri R."/>
            <person name="Henderson I.R."/>
            <person name="Sperandio V."/>
            <person name="Ravel J."/>
        </authorList>
    </citation>
    <scope>NUCLEOTIDE SEQUENCE [LARGE SCALE GENOMIC DNA]</scope>
    <source>
        <strain>HS</strain>
    </source>
</reference>
<comment type="similarity">
    <text evidence="1">Belongs to the bacterial ribosomal protein bL27 family.</text>
</comment>
<organism>
    <name type="scientific">Escherichia coli O9:H4 (strain HS)</name>
    <dbReference type="NCBI Taxonomy" id="331112"/>
    <lineage>
        <taxon>Bacteria</taxon>
        <taxon>Pseudomonadati</taxon>
        <taxon>Pseudomonadota</taxon>
        <taxon>Gammaproteobacteria</taxon>
        <taxon>Enterobacterales</taxon>
        <taxon>Enterobacteriaceae</taxon>
        <taxon>Escherichia</taxon>
    </lineage>
</organism>
<name>RL27_ECOHS</name>